<reference key="1">
    <citation type="submission" date="2005-08" db="EMBL/GenBank/DDBJ databases">
        <authorList>
            <consortium name="NIH - Mammalian Gene Collection (MGC) project"/>
        </authorList>
    </citation>
    <scope>NUCLEOTIDE SEQUENCE [LARGE SCALE MRNA]</scope>
    <source>
        <strain>Hereford</strain>
        <tissue>Testis</tissue>
    </source>
</reference>
<proteinExistence type="evidence at transcript level"/>
<sequence length="381" mass="41592">MSWTVGILRASQRAGTVRANFLCLGMAPSPCPPAATPLGGAWAVAPASKMATVKCELMKNFTSEEPVRNSKISIVGTGSVGMACAVSILLKGLSDELALVDVDEGRLKGETMDLQHGSLFVKMPNIVSSRDYVVTANSNLVIITAGARQEKGETRLNLVQRNVAIFKLMMSSIVQYSPRCKLIVVSNPVDILTYVAWKLSAFPQNRVIGSGCNLDTARFRFLIGQRLSIHSESCHGWILGEHGDSSVPVWSGVNIAGVPLKELNLDIGTDKDPEQWKNVHKDVVASAYEIIKMKGYTYWAIGLSVADLTESILKNLRRVHPVSTRIKGLYGINEEVFLSVPCILGESGITDLIKVKLAPEEEARLQKSAKTLWDIQKELKF</sequence>
<comment type="catalytic activity">
    <reaction>
        <text>(S)-lactate + NAD(+) = pyruvate + NADH + H(+)</text>
        <dbReference type="Rhea" id="RHEA:23444"/>
        <dbReference type="ChEBI" id="CHEBI:15361"/>
        <dbReference type="ChEBI" id="CHEBI:15378"/>
        <dbReference type="ChEBI" id="CHEBI:16651"/>
        <dbReference type="ChEBI" id="CHEBI:57540"/>
        <dbReference type="ChEBI" id="CHEBI:57945"/>
        <dbReference type="EC" id="1.1.1.27"/>
    </reaction>
</comment>
<comment type="pathway">
    <text>Fermentation; pyruvate fermentation to lactate; (S)-lactate from pyruvate: step 1/1.</text>
</comment>
<comment type="similarity">
    <text evidence="2">Belongs to the LDH/MDH superfamily. LDH family.</text>
</comment>
<comment type="caution">
    <text evidence="2">It is uncertain whether Met-1 or Met-50 is the initiator.</text>
</comment>
<name>LDH6B_BOVIN</name>
<feature type="chain" id="PRO_0000239653" description="L-lactate dehydrogenase A-like 6B">
    <location>
        <begin position="1"/>
        <end position="381"/>
    </location>
</feature>
<feature type="active site" description="Proton acceptor" evidence="1">
    <location>
        <position position="242"/>
    </location>
</feature>
<feature type="binding site" evidence="1">
    <location>
        <begin position="101"/>
        <end position="106"/>
    </location>
    <ligand>
        <name>NAD(+)</name>
        <dbReference type="ChEBI" id="CHEBI:57540"/>
    </ligand>
</feature>
<feature type="binding site" evidence="1">
    <location>
        <position position="148"/>
    </location>
    <ligand>
        <name>NAD(+)</name>
        <dbReference type="ChEBI" id="CHEBI:57540"/>
    </ligand>
</feature>
<feature type="binding site" evidence="1">
    <location>
        <position position="155"/>
    </location>
    <ligand>
        <name>substrate</name>
    </ligand>
</feature>
<feature type="binding site" evidence="1">
    <location>
        <position position="187"/>
    </location>
    <ligand>
        <name>NAD(+)</name>
        <dbReference type="ChEBI" id="CHEBI:57540"/>
    </ligand>
</feature>
<feature type="binding site" evidence="1">
    <location>
        <position position="187"/>
    </location>
    <ligand>
        <name>substrate</name>
    </ligand>
</feature>
<feature type="binding site" evidence="1">
    <location>
        <position position="218"/>
    </location>
    <ligand>
        <name>substrate</name>
    </ligand>
</feature>
<feature type="binding site" evidence="1">
    <location>
        <position position="297"/>
    </location>
    <ligand>
        <name>substrate</name>
    </ligand>
</feature>
<dbReference type="EC" id="1.1.1.27"/>
<dbReference type="EMBL" id="BC102557">
    <property type="protein sequence ID" value="AAI02558.1"/>
    <property type="molecule type" value="mRNA"/>
</dbReference>
<dbReference type="RefSeq" id="NP_001030352.1">
    <property type="nucleotide sequence ID" value="NM_001035275.2"/>
</dbReference>
<dbReference type="SMR" id="Q3T056"/>
<dbReference type="FunCoup" id="Q3T056">
    <property type="interactions" value="140"/>
</dbReference>
<dbReference type="IntAct" id="Q3T056">
    <property type="interactions" value="1"/>
</dbReference>
<dbReference type="PeptideAtlas" id="Q3T056"/>
<dbReference type="GeneID" id="509519"/>
<dbReference type="KEGG" id="bta:509519"/>
<dbReference type="CTD" id="92483"/>
<dbReference type="InParanoid" id="Q3T056"/>
<dbReference type="OrthoDB" id="5405561at2759"/>
<dbReference type="UniPathway" id="UPA00554">
    <property type="reaction ID" value="UER00611"/>
</dbReference>
<dbReference type="Proteomes" id="UP000009136">
    <property type="component" value="Unplaced"/>
</dbReference>
<dbReference type="GO" id="GO:0005739">
    <property type="term" value="C:mitochondrion"/>
    <property type="evidence" value="ECO:0000318"/>
    <property type="project" value="GO_Central"/>
</dbReference>
<dbReference type="GO" id="GO:0004459">
    <property type="term" value="F:L-lactate dehydrogenase activity"/>
    <property type="evidence" value="ECO:0000318"/>
    <property type="project" value="GO_Central"/>
</dbReference>
<dbReference type="GO" id="GO:0006089">
    <property type="term" value="P:lactate metabolic process"/>
    <property type="evidence" value="ECO:0000318"/>
    <property type="project" value="GO_Central"/>
</dbReference>
<dbReference type="GO" id="GO:0006090">
    <property type="term" value="P:pyruvate metabolic process"/>
    <property type="evidence" value="ECO:0000318"/>
    <property type="project" value="GO_Central"/>
</dbReference>
<dbReference type="CDD" id="cd05293">
    <property type="entry name" value="LDH_1"/>
    <property type="match status" value="1"/>
</dbReference>
<dbReference type="FunFam" id="3.40.50.720:FF:000029">
    <property type="entry name" value="L-lactate dehydrogenase A chain"/>
    <property type="match status" value="1"/>
</dbReference>
<dbReference type="FunFam" id="3.90.110.10:FF:000003">
    <property type="entry name" value="L-lactate dehydrogenase A chain"/>
    <property type="match status" value="1"/>
</dbReference>
<dbReference type="Gene3D" id="3.90.110.10">
    <property type="entry name" value="Lactate dehydrogenase/glycoside hydrolase, family 4, C-terminal"/>
    <property type="match status" value="1"/>
</dbReference>
<dbReference type="Gene3D" id="3.40.50.720">
    <property type="entry name" value="NAD(P)-binding Rossmann-like Domain"/>
    <property type="match status" value="1"/>
</dbReference>
<dbReference type="HAMAP" id="MF_00488">
    <property type="entry name" value="Lactate_dehydrog"/>
    <property type="match status" value="1"/>
</dbReference>
<dbReference type="InterPro" id="IPR001557">
    <property type="entry name" value="L-lactate/malate_DH"/>
</dbReference>
<dbReference type="InterPro" id="IPR011304">
    <property type="entry name" value="L-lactate_DH"/>
</dbReference>
<dbReference type="InterPro" id="IPR018177">
    <property type="entry name" value="L-lactate_DH_AS"/>
</dbReference>
<dbReference type="InterPro" id="IPR022383">
    <property type="entry name" value="Lactate/malate_DH_C"/>
</dbReference>
<dbReference type="InterPro" id="IPR001236">
    <property type="entry name" value="Lactate/malate_DH_N"/>
</dbReference>
<dbReference type="InterPro" id="IPR015955">
    <property type="entry name" value="Lactate_DH/Glyco_Ohase_4_C"/>
</dbReference>
<dbReference type="InterPro" id="IPR036291">
    <property type="entry name" value="NAD(P)-bd_dom_sf"/>
</dbReference>
<dbReference type="NCBIfam" id="TIGR01771">
    <property type="entry name" value="L-LDH-NAD"/>
    <property type="match status" value="1"/>
</dbReference>
<dbReference type="PANTHER" id="PTHR43128">
    <property type="entry name" value="L-2-HYDROXYCARBOXYLATE DEHYDROGENASE (NAD(P)(+))"/>
    <property type="match status" value="1"/>
</dbReference>
<dbReference type="PANTHER" id="PTHR43128:SF8">
    <property type="entry name" value="L-LACTATE DEHYDROGENASE A-LIKE 6B"/>
    <property type="match status" value="1"/>
</dbReference>
<dbReference type="Pfam" id="PF02866">
    <property type="entry name" value="Ldh_1_C"/>
    <property type="match status" value="1"/>
</dbReference>
<dbReference type="Pfam" id="PF00056">
    <property type="entry name" value="Ldh_1_N"/>
    <property type="match status" value="1"/>
</dbReference>
<dbReference type="PIRSF" id="PIRSF000102">
    <property type="entry name" value="Lac_mal_DH"/>
    <property type="match status" value="1"/>
</dbReference>
<dbReference type="PRINTS" id="PR00086">
    <property type="entry name" value="LLDHDRGNASE"/>
</dbReference>
<dbReference type="SUPFAM" id="SSF56327">
    <property type="entry name" value="LDH C-terminal domain-like"/>
    <property type="match status" value="1"/>
</dbReference>
<dbReference type="SUPFAM" id="SSF51735">
    <property type="entry name" value="NAD(P)-binding Rossmann-fold domains"/>
    <property type="match status" value="1"/>
</dbReference>
<dbReference type="PROSITE" id="PS00064">
    <property type="entry name" value="L_LDH"/>
    <property type="match status" value="1"/>
</dbReference>
<keyword id="KW-0520">NAD</keyword>
<keyword id="KW-0560">Oxidoreductase</keyword>
<keyword id="KW-1185">Reference proteome</keyword>
<accession>Q3T056</accession>
<organism>
    <name type="scientific">Bos taurus</name>
    <name type="common">Bovine</name>
    <dbReference type="NCBI Taxonomy" id="9913"/>
    <lineage>
        <taxon>Eukaryota</taxon>
        <taxon>Metazoa</taxon>
        <taxon>Chordata</taxon>
        <taxon>Craniata</taxon>
        <taxon>Vertebrata</taxon>
        <taxon>Euteleostomi</taxon>
        <taxon>Mammalia</taxon>
        <taxon>Eutheria</taxon>
        <taxon>Laurasiatheria</taxon>
        <taxon>Artiodactyla</taxon>
        <taxon>Ruminantia</taxon>
        <taxon>Pecora</taxon>
        <taxon>Bovidae</taxon>
        <taxon>Bovinae</taxon>
        <taxon>Bos</taxon>
    </lineage>
</organism>
<protein>
    <recommendedName>
        <fullName>L-lactate dehydrogenase A-like 6B</fullName>
        <ecNumber>1.1.1.27</ecNumber>
    </recommendedName>
</protein>
<evidence type="ECO:0000250" key="1"/>
<evidence type="ECO:0000305" key="2"/>
<gene>
    <name type="primary">LDHAL6B</name>
</gene>